<sequence length="357" mass="40299">MPQTLHVHSRVKDYDILFTDHVLKTLADCLGERKQRKLLFITDQTVYHLYQTLFEEFAQQYNAFVHVCPPGGQTKSLERVSAIYDQLIAENFSKKDMIVTIGGGVVGDLGGFVAATYSRGIPYIQIPTTLLSQVDSSIGGKVGVHFKSLTNMIGSIYPPEAIIISTTFLETLPQREFSCGISEMLKIGFIHDRPLFQQLRDFQKETDKQGLERLIYQSISNKKQIVEQDEFENGLRMSLNFGHTLGHAIESLCHHDFYHHGEAIAIGMVVDAKLAVSKGLLPKEDLDSLLQVFERYQLPTTLERADVSATSLFDVFKTDKKNSEQHIIFILPTETGFTTLAINKDDHQFVEKLDSLL</sequence>
<organism>
    <name type="scientific">Streptococcus pyogenes serotype M49 (strain NZ131)</name>
    <dbReference type="NCBI Taxonomy" id="471876"/>
    <lineage>
        <taxon>Bacteria</taxon>
        <taxon>Bacillati</taxon>
        <taxon>Bacillota</taxon>
        <taxon>Bacilli</taxon>
        <taxon>Lactobacillales</taxon>
        <taxon>Streptococcaceae</taxon>
        <taxon>Streptococcus</taxon>
    </lineage>
</organism>
<feature type="chain" id="PRO_1000094639" description="3-dehydroquinate synthase">
    <location>
        <begin position="1"/>
        <end position="357"/>
    </location>
</feature>
<feature type="binding site" evidence="1">
    <location>
        <begin position="104"/>
        <end position="108"/>
    </location>
    <ligand>
        <name>NAD(+)</name>
        <dbReference type="ChEBI" id="CHEBI:57540"/>
    </ligand>
</feature>
<feature type="binding site" evidence="1">
    <location>
        <begin position="128"/>
        <end position="129"/>
    </location>
    <ligand>
        <name>NAD(+)</name>
        <dbReference type="ChEBI" id="CHEBI:57540"/>
    </ligand>
</feature>
<feature type="binding site" evidence="1">
    <location>
        <position position="141"/>
    </location>
    <ligand>
        <name>NAD(+)</name>
        <dbReference type="ChEBI" id="CHEBI:57540"/>
    </ligand>
</feature>
<feature type="binding site" evidence="1">
    <location>
        <begin position="168"/>
        <end position="171"/>
    </location>
    <ligand>
        <name>NAD(+)</name>
        <dbReference type="ChEBI" id="CHEBI:57540"/>
    </ligand>
</feature>
<feature type="binding site" evidence="1">
    <location>
        <position position="183"/>
    </location>
    <ligand>
        <name>Zn(2+)</name>
        <dbReference type="ChEBI" id="CHEBI:29105"/>
    </ligand>
</feature>
<feature type="binding site" evidence="1">
    <location>
        <position position="243"/>
    </location>
    <ligand>
        <name>Zn(2+)</name>
        <dbReference type="ChEBI" id="CHEBI:29105"/>
    </ligand>
</feature>
<feature type="binding site" evidence="1">
    <location>
        <position position="260"/>
    </location>
    <ligand>
        <name>Zn(2+)</name>
        <dbReference type="ChEBI" id="CHEBI:29105"/>
    </ligand>
</feature>
<accession>B5XME6</accession>
<dbReference type="EC" id="4.2.3.4" evidence="1"/>
<dbReference type="EMBL" id="CP000829">
    <property type="protein sequence ID" value="ACI61508.1"/>
    <property type="molecule type" value="Genomic_DNA"/>
</dbReference>
<dbReference type="SMR" id="B5XME6"/>
<dbReference type="KEGG" id="soz:Spy49_1221"/>
<dbReference type="HOGENOM" id="CLU_001201_0_1_9"/>
<dbReference type="UniPathway" id="UPA00053">
    <property type="reaction ID" value="UER00085"/>
</dbReference>
<dbReference type="Proteomes" id="UP000001039">
    <property type="component" value="Chromosome"/>
</dbReference>
<dbReference type="GO" id="GO:0005737">
    <property type="term" value="C:cytoplasm"/>
    <property type="evidence" value="ECO:0007669"/>
    <property type="project" value="UniProtKB-SubCell"/>
</dbReference>
<dbReference type="GO" id="GO:0003856">
    <property type="term" value="F:3-dehydroquinate synthase activity"/>
    <property type="evidence" value="ECO:0007669"/>
    <property type="project" value="UniProtKB-UniRule"/>
</dbReference>
<dbReference type="GO" id="GO:0046872">
    <property type="term" value="F:metal ion binding"/>
    <property type="evidence" value="ECO:0007669"/>
    <property type="project" value="UniProtKB-KW"/>
</dbReference>
<dbReference type="GO" id="GO:0000166">
    <property type="term" value="F:nucleotide binding"/>
    <property type="evidence" value="ECO:0007669"/>
    <property type="project" value="UniProtKB-KW"/>
</dbReference>
<dbReference type="GO" id="GO:0008652">
    <property type="term" value="P:amino acid biosynthetic process"/>
    <property type="evidence" value="ECO:0007669"/>
    <property type="project" value="UniProtKB-KW"/>
</dbReference>
<dbReference type="GO" id="GO:0009073">
    <property type="term" value="P:aromatic amino acid family biosynthetic process"/>
    <property type="evidence" value="ECO:0007669"/>
    <property type="project" value="UniProtKB-KW"/>
</dbReference>
<dbReference type="GO" id="GO:0009423">
    <property type="term" value="P:chorismate biosynthetic process"/>
    <property type="evidence" value="ECO:0007669"/>
    <property type="project" value="UniProtKB-UniRule"/>
</dbReference>
<dbReference type="CDD" id="cd08195">
    <property type="entry name" value="DHQS"/>
    <property type="match status" value="1"/>
</dbReference>
<dbReference type="FunFam" id="3.40.50.1970:FF:000007">
    <property type="entry name" value="Pentafunctional AROM polypeptide"/>
    <property type="match status" value="1"/>
</dbReference>
<dbReference type="Gene3D" id="3.40.50.1970">
    <property type="match status" value="1"/>
</dbReference>
<dbReference type="Gene3D" id="1.20.1090.10">
    <property type="entry name" value="Dehydroquinate synthase-like - alpha domain"/>
    <property type="match status" value="1"/>
</dbReference>
<dbReference type="HAMAP" id="MF_00110">
    <property type="entry name" value="DHQ_synthase"/>
    <property type="match status" value="1"/>
</dbReference>
<dbReference type="InterPro" id="IPR050071">
    <property type="entry name" value="Dehydroquinate_synthase"/>
</dbReference>
<dbReference type="InterPro" id="IPR016037">
    <property type="entry name" value="DHQ_synth_AroB"/>
</dbReference>
<dbReference type="InterPro" id="IPR030963">
    <property type="entry name" value="DHQ_synth_fam"/>
</dbReference>
<dbReference type="InterPro" id="IPR030960">
    <property type="entry name" value="DHQS/DOIS_N"/>
</dbReference>
<dbReference type="InterPro" id="IPR056179">
    <property type="entry name" value="DHQS_C"/>
</dbReference>
<dbReference type="NCBIfam" id="TIGR01357">
    <property type="entry name" value="aroB"/>
    <property type="match status" value="1"/>
</dbReference>
<dbReference type="PANTHER" id="PTHR43622">
    <property type="entry name" value="3-DEHYDROQUINATE SYNTHASE"/>
    <property type="match status" value="1"/>
</dbReference>
<dbReference type="PANTHER" id="PTHR43622:SF1">
    <property type="entry name" value="3-DEHYDROQUINATE SYNTHASE"/>
    <property type="match status" value="1"/>
</dbReference>
<dbReference type="Pfam" id="PF01761">
    <property type="entry name" value="DHQ_synthase"/>
    <property type="match status" value="1"/>
</dbReference>
<dbReference type="Pfam" id="PF24621">
    <property type="entry name" value="DHQS_C"/>
    <property type="match status" value="1"/>
</dbReference>
<dbReference type="PIRSF" id="PIRSF001455">
    <property type="entry name" value="DHQ_synth"/>
    <property type="match status" value="1"/>
</dbReference>
<dbReference type="SUPFAM" id="SSF56796">
    <property type="entry name" value="Dehydroquinate synthase-like"/>
    <property type="match status" value="1"/>
</dbReference>
<protein>
    <recommendedName>
        <fullName evidence="1">3-dehydroquinate synthase</fullName>
        <shortName evidence="1">DHQS</shortName>
        <ecNumber evidence="1">4.2.3.4</ecNumber>
    </recommendedName>
</protein>
<evidence type="ECO:0000255" key="1">
    <source>
        <dbReference type="HAMAP-Rule" id="MF_00110"/>
    </source>
</evidence>
<proteinExistence type="inferred from homology"/>
<gene>
    <name evidence="1" type="primary">aroB</name>
    <name type="ordered locus">Spy49_1221</name>
</gene>
<comment type="function">
    <text evidence="1">Catalyzes the conversion of 3-deoxy-D-arabino-heptulosonate 7-phosphate (DAHP) to dehydroquinate (DHQ).</text>
</comment>
<comment type="catalytic activity">
    <reaction evidence="1">
        <text>7-phospho-2-dehydro-3-deoxy-D-arabino-heptonate = 3-dehydroquinate + phosphate</text>
        <dbReference type="Rhea" id="RHEA:21968"/>
        <dbReference type="ChEBI" id="CHEBI:32364"/>
        <dbReference type="ChEBI" id="CHEBI:43474"/>
        <dbReference type="ChEBI" id="CHEBI:58394"/>
        <dbReference type="EC" id="4.2.3.4"/>
    </reaction>
</comment>
<comment type="cofactor">
    <cofactor evidence="1">
        <name>Co(2+)</name>
        <dbReference type="ChEBI" id="CHEBI:48828"/>
    </cofactor>
    <cofactor evidence="1">
        <name>Zn(2+)</name>
        <dbReference type="ChEBI" id="CHEBI:29105"/>
    </cofactor>
    <text evidence="1">Binds 1 divalent metal cation per subunit. Can use either Co(2+) or Zn(2+).</text>
</comment>
<comment type="cofactor">
    <cofactor evidence="1">
        <name>NAD(+)</name>
        <dbReference type="ChEBI" id="CHEBI:57540"/>
    </cofactor>
</comment>
<comment type="pathway">
    <text evidence="1">Metabolic intermediate biosynthesis; chorismate biosynthesis; chorismate from D-erythrose 4-phosphate and phosphoenolpyruvate: step 2/7.</text>
</comment>
<comment type="subcellular location">
    <subcellularLocation>
        <location evidence="1">Cytoplasm</location>
    </subcellularLocation>
</comment>
<comment type="similarity">
    <text evidence="1">Belongs to the sugar phosphate cyclases superfamily. Dehydroquinate synthase family.</text>
</comment>
<keyword id="KW-0028">Amino-acid biosynthesis</keyword>
<keyword id="KW-0057">Aromatic amino acid biosynthesis</keyword>
<keyword id="KW-0170">Cobalt</keyword>
<keyword id="KW-0963">Cytoplasm</keyword>
<keyword id="KW-0456">Lyase</keyword>
<keyword id="KW-0479">Metal-binding</keyword>
<keyword id="KW-0520">NAD</keyword>
<keyword id="KW-0547">Nucleotide-binding</keyword>
<keyword id="KW-0862">Zinc</keyword>
<reference key="1">
    <citation type="journal article" date="2008" name="J. Bacteriol.">
        <title>Genome sequence of a nephritogenic and highly transformable M49 strain of Streptococcus pyogenes.</title>
        <authorList>
            <person name="McShan W.M."/>
            <person name="Ferretti J.J."/>
            <person name="Karasawa T."/>
            <person name="Suvorov A.N."/>
            <person name="Lin S."/>
            <person name="Qin B."/>
            <person name="Jia H."/>
            <person name="Kenton S."/>
            <person name="Najar F."/>
            <person name="Wu H."/>
            <person name="Scott J."/>
            <person name="Roe B.A."/>
            <person name="Savic D.J."/>
        </authorList>
    </citation>
    <scope>NUCLEOTIDE SEQUENCE [LARGE SCALE GENOMIC DNA]</scope>
    <source>
        <strain>NZ131</strain>
    </source>
</reference>
<name>AROB_STRPZ</name>